<protein>
    <recommendedName>
        <fullName evidence="1">Phospho-N-acetylmuramoyl-pentapeptide-transferase</fullName>
        <ecNumber evidence="1">2.7.8.13</ecNumber>
    </recommendedName>
    <alternativeName>
        <fullName evidence="1">UDP-MurNAc-pentapeptide phosphotransferase</fullName>
    </alternativeName>
</protein>
<keyword id="KW-0131">Cell cycle</keyword>
<keyword id="KW-0132">Cell division</keyword>
<keyword id="KW-1003">Cell membrane</keyword>
<keyword id="KW-0133">Cell shape</keyword>
<keyword id="KW-0961">Cell wall biogenesis/degradation</keyword>
<keyword id="KW-0460">Magnesium</keyword>
<keyword id="KW-0472">Membrane</keyword>
<keyword id="KW-0479">Metal-binding</keyword>
<keyword id="KW-0573">Peptidoglycan synthesis</keyword>
<keyword id="KW-0808">Transferase</keyword>
<keyword id="KW-0812">Transmembrane</keyword>
<keyword id="KW-1133">Transmembrane helix</keyword>
<proteinExistence type="inferred from homology"/>
<dbReference type="EC" id="2.7.8.13" evidence="1"/>
<dbReference type="EMBL" id="FM204883">
    <property type="protein sequence ID" value="CAW94934.1"/>
    <property type="molecule type" value="Genomic_DNA"/>
</dbReference>
<dbReference type="RefSeq" id="WP_012680015.1">
    <property type="nucleotide sequence ID" value="NC_012471.1"/>
</dbReference>
<dbReference type="SMR" id="C0M7A5"/>
<dbReference type="KEGG" id="seu:SEQ_1802"/>
<dbReference type="HOGENOM" id="CLU_023982_0_1_9"/>
<dbReference type="OrthoDB" id="9805475at2"/>
<dbReference type="UniPathway" id="UPA00219"/>
<dbReference type="Proteomes" id="UP000001365">
    <property type="component" value="Chromosome"/>
</dbReference>
<dbReference type="GO" id="GO:0005886">
    <property type="term" value="C:plasma membrane"/>
    <property type="evidence" value="ECO:0007669"/>
    <property type="project" value="UniProtKB-SubCell"/>
</dbReference>
<dbReference type="GO" id="GO:0046872">
    <property type="term" value="F:metal ion binding"/>
    <property type="evidence" value="ECO:0007669"/>
    <property type="project" value="UniProtKB-KW"/>
</dbReference>
<dbReference type="GO" id="GO:0008963">
    <property type="term" value="F:phospho-N-acetylmuramoyl-pentapeptide-transferase activity"/>
    <property type="evidence" value="ECO:0007669"/>
    <property type="project" value="UniProtKB-UniRule"/>
</dbReference>
<dbReference type="GO" id="GO:0051301">
    <property type="term" value="P:cell division"/>
    <property type="evidence" value="ECO:0007669"/>
    <property type="project" value="UniProtKB-KW"/>
</dbReference>
<dbReference type="GO" id="GO:0071555">
    <property type="term" value="P:cell wall organization"/>
    <property type="evidence" value="ECO:0007669"/>
    <property type="project" value="UniProtKB-KW"/>
</dbReference>
<dbReference type="GO" id="GO:0009252">
    <property type="term" value="P:peptidoglycan biosynthetic process"/>
    <property type="evidence" value="ECO:0007669"/>
    <property type="project" value="UniProtKB-UniRule"/>
</dbReference>
<dbReference type="GO" id="GO:0008360">
    <property type="term" value="P:regulation of cell shape"/>
    <property type="evidence" value="ECO:0007669"/>
    <property type="project" value="UniProtKB-KW"/>
</dbReference>
<dbReference type="CDD" id="cd06852">
    <property type="entry name" value="GT_MraY"/>
    <property type="match status" value="1"/>
</dbReference>
<dbReference type="HAMAP" id="MF_00038">
    <property type="entry name" value="MraY"/>
    <property type="match status" value="1"/>
</dbReference>
<dbReference type="InterPro" id="IPR000715">
    <property type="entry name" value="Glycosyl_transferase_4"/>
</dbReference>
<dbReference type="InterPro" id="IPR003524">
    <property type="entry name" value="PNAcMuramoyl-5peptid_Trfase"/>
</dbReference>
<dbReference type="InterPro" id="IPR018480">
    <property type="entry name" value="PNAcMuramoyl-5peptid_Trfase_CS"/>
</dbReference>
<dbReference type="NCBIfam" id="TIGR00445">
    <property type="entry name" value="mraY"/>
    <property type="match status" value="1"/>
</dbReference>
<dbReference type="PANTHER" id="PTHR22926">
    <property type="entry name" value="PHOSPHO-N-ACETYLMURAMOYL-PENTAPEPTIDE-TRANSFERASE"/>
    <property type="match status" value="1"/>
</dbReference>
<dbReference type="PANTHER" id="PTHR22926:SF5">
    <property type="entry name" value="PHOSPHO-N-ACETYLMURAMOYL-PENTAPEPTIDE-TRANSFERASE HOMOLOG"/>
    <property type="match status" value="1"/>
</dbReference>
<dbReference type="Pfam" id="PF00953">
    <property type="entry name" value="Glycos_transf_4"/>
    <property type="match status" value="1"/>
</dbReference>
<dbReference type="Pfam" id="PF10555">
    <property type="entry name" value="MraY_sig1"/>
    <property type="match status" value="1"/>
</dbReference>
<dbReference type="PROSITE" id="PS01348">
    <property type="entry name" value="MRAY_2"/>
    <property type="match status" value="1"/>
</dbReference>
<reference key="1">
    <citation type="journal article" date="2009" name="PLoS Pathog.">
        <title>Genomic evidence for the evolution of Streptococcus equi: host restriction, increased virulence, and genetic exchange with human pathogens.</title>
        <authorList>
            <person name="Holden M.T.G."/>
            <person name="Heather Z."/>
            <person name="Paillot R."/>
            <person name="Steward K.F."/>
            <person name="Webb K."/>
            <person name="Ainslie F."/>
            <person name="Jourdan T."/>
            <person name="Bason N.C."/>
            <person name="Holroyd N.E."/>
            <person name="Mungall K."/>
            <person name="Quail M.A."/>
            <person name="Sanders M."/>
            <person name="Simmonds M."/>
            <person name="Willey D."/>
            <person name="Brooks K."/>
            <person name="Aanensen D.M."/>
            <person name="Spratt B.G."/>
            <person name="Jolley K.A."/>
            <person name="Maiden M.C.J."/>
            <person name="Kehoe M."/>
            <person name="Chanter N."/>
            <person name="Bentley S.D."/>
            <person name="Robinson C."/>
            <person name="Maskell D.J."/>
            <person name="Parkhill J."/>
            <person name="Waller A.S."/>
        </authorList>
    </citation>
    <scope>NUCLEOTIDE SEQUENCE [LARGE SCALE GENOMIC DNA]</scope>
    <source>
        <strain>4047</strain>
    </source>
</reference>
<sequence length="335" mass="36887">MFLTILAGLIAFAVTALAMPHFIRLYQLKKIGGQQMHEDVKQHLAKAGTPTMGGTVFLLVATSLSFVFALVYFRDGQSLGLISGILLIVLIYGIIGFLDDFLKIFKQVNEGLTAKQKFTFQIVGGLVFYVIHVMPSGIDAINVFGYHWHLGFLYLCFVLFWVVGFSNAVNLTDGIDGLASVSVVISLLAYGVIAYAQGQFDVLLLIGIMVGALLAFFLFNHKPAKIFMGDVGSLALGAMLAAISIALRQEWTLLVIGIVYVLETSSVMLQVTYFKYTKKKYGEGRRIFRMTPFHHHLELGGLSGKAAKWSEWKVDAFLWALGLVASLIVLAILYL</sequence>
<organism>
    <name type="scientific">Streptococcus equi subsp. equi (strain 4047)</name>
    <dbReference type="NCBI Taxonomy" id="553482"/>
    <lineage>
        <taxon>Bacteria</taxon>
        <taxon>Bacillati</taxon>
        <taxon>Bacillota</taxon>
        <taxon>Bacilli</taxon>
        <taxon>Lactobacillales</taxon>
        <taxon>Streptococcaceae</taxon>
        <taxon>Streptococcus</taxon>
    </lineage>
</organism>
<comment type="function">
    <text evidence="1">Catalyzes the initial step of the lipid cycle reactions in the biosynthesis of the cell wall peptidoglycan: transfers peptidoglycan precursor phospho-MurNAc-pentapeptide from UDP-MurNAc-pentapeptide onto the lipid carrier undecaprenyl phosphate, yielding undecaprenyl-pyrophosphoryl-MurNAc-pentapeptide, known as lipid I.</text>
</comment>
<comment type="catalytic activity">
    <reaction evidence="1">
        <text>UDP-N-acetyl-alpha-D-muramoyl-L-alanyl-gamma-D-glutamyl-L-lysyl-D-alanyl-D-alanine + di-trans,octa-cis-undecaprenyl phosphate = Mur2Ac(oyl-L-Ala-gamma-D-Glu-L-Lys-D-Ala-D-Ala)-di-trans,octa-cis-undecaprenyl diphosphate + UMP</text>
        <dbReference type="Rhea" id="RHEA:21920"/>
        <dbReference type="ChEBI" id="CHEBI:57865"/>
        <dbReference type="ChEBI" id="CHEBI:60032"/>
        <dbReference type="ChEBI" id="CHEBI:60392"/>
        <dbReference type="ChEBI" id="CHEBI:70758"/>
        <dbReference type="EC" id="2.7.8.13"/>
    </reaction>
</comment>
<comment type="cofactor">
    <cofactor evidence="1">
        <name>Mg(2+)</name>
        <dbReference type="ChEBI" id="CHEBI:18420"/>
    </cofactor>
</comment>
<comment type="pathway">
    <text evidence="1">Cell wall biogenesis; peptidoglycan biosynthesis.</text>
</comment>
<comment type="subcellular location">
    <subcellularLocation>
        <location evidence="1">Cell membrane</location>
        <topology evidence="1">Multi-pass membrane protein</topology>
    </subcellularLocation>
</comment>
<comment type="similarity">
    <text evidence="1">Belongs to the glycosyltransferase 4 family. MraY subfamily.</text>
</comment>
<evidence type="ECO:0000255" key="1">
    <source>
        <dbReference type="HAMAP-Rule" id="MF_00038"/>
    </source>
</evidence>
<gene>
    <name evidence="1" type="primary">mraY</name>
    <name type="ordered locus">SEQ_1802</name>
</gene>
<name>MRAY_STRE4</name>
<accession>C0M7A5</accession>
<feature type="chain" id="PRO_1000117197" description="Phospho-N-acetylmuramoyl-pentapeptide-transferase">
    <location>
        <begin position="1"/>
        <end position="335"/>
    </location>
</feature>
<feature type="transmembrane region" description="Helical" evidence="1">
    <location>
        <begin position="3"/>
        <end position="23"/>
    </location>
</feature>
<feature type="transmembrane region" description="Helical" evidence="1">
    <location>
        <begin position="53"/>
        <end position="73"/>
    </location>
</feature>
<feature type="transmembrane region" description="Helical" evidence="1">
    <location>
        <begin position="78"/>
        <end position="98"/>
    </location>
</feature>
<feature type="transmembrane region" description="Helical" evidence="1">
    <location>
        <begin position="118"/>
        <end position="138"/>
    </location>
</feature>
<feature type="transmembrane region" description="Helical" evidence="1">
    <location>
        <begin position="143"/>
        <end position="163"/>
    </location>
</feature>
<feature type="transmembrane region" description="Helical" evidence="1">
    <location>
        <begin position="174"/>
        <end position="194"/>
    </location>
</feature>
<feature type="transmembrane region" description="Helical" evidence="1">
    <location>
        <begin position="200"/>
        <end position="220"/>
    </location>
</feature>
<feature type="transmembrane region" description="Helical" evidence="1">
    <location>
        <begin position="226"/>
        <end position="246"/>
    </location>
</feature>
<feature type="transmembrane region" description="Helical" evidence="1">
    <location>
        <begin position="251"/>
        <end position="271"/>
    </location>
</feature>
<feature type="transmembrane region" description="Helical" evidence="1">
    <location>
        <begin position="314"/>
        <end position="334"/>
    </location>
</feature>